<accession>A9IJN0</accession>
<comment type="function">
    <text evidence="1">This protein is located at the 30S-50S ribosomal subunit interface and may play a role in the structure and function of the aminoacyl-tRNA binding site.</text>
</comment>
<comment type="similarity">
    <text evidence="1">Belongs to the bacterial ribosomal protein bL19 family.</text>
</comment>
<organism>
    <name type="scientific">Bordetella petrii (strain ATCC BAA-461 / DSM 12804 / CCUG 43448)</name>
    <dbReference type="NCBI Taxonomy" id="340100"/>
    <lineage>
        <taxon>Bacteria</taxon>
        <taxon>Pseudomonadati</taxon>
        <taxon>Pseudomonadota</taxon>
        <taxon>Betaproteobacteria</taxon>
        <taxon>Burkholderiales</taxon>
        <taxon>Alcaligenaceae</taxon>
        <taxon>Bordetella</taxon>
    </lineage>
</organism>
<feature type="chain" id="PRO_1000193795" description="Large ribosomal subunit protein bL19">
    <location>
        <begin position="1"/>
        <end position="126"/>
    </location>
</feature>
<reference key="1">
    <citation type="journal article" date="2008" name="BMC Genomics">
        <title>The missing link: Bordetella petrii is endowed with both the metabolic versatility of environmental bacteria and virulence traits of pathogenic Bordetellae.</title>
        <authorList>
            <person name="Gross R."/>
            <person name="Guzman C.A."/>
            <person name="Sebaihia M."/>
            <person name="Martin dos Santos V.A.P."/>
            <person name="Pieper D.H."/>
            <person name="Koebnik R."/>
            <person name="Lechner M."/>
            <person name="Bartels D."/>
            <person name="Buhrmester J."/>
            <person name="Choudhuri J.V."/>
            <person name="Ebensen T."/>
            <person name="Gaigalat L."/>
            <person name="Herrmann S."/>
            <person name="Khachane A.N."/>
            <person name="Larisch C."/>
            <person name="Link S."/>
            <person name="Linke B."/>
            <person name="Meyer F."/>
            <person name="Mormann S."/>
            <person name="Nakunst D."/>
            <person name="Rueckert C."/>
            <person name="Schneiker-Bekel S."/>
            <person name="Schulze K."/>
            <person name="Voerholter F.-J."/>
            <person name="Yevsa T."/>
            <person name="Engle J.T."/>
            <person name="Goldman W.E."/>
            <person name="Puehler A."/>
            <person name="Goebel U.B."/>
            <person name="Goesmann A."/>
            <person name="Bloecker H."/>
            <person name="Kaiser O."/>
            <person name="Martinez-Arias R."/>
        </authorList>
    </citation>
    <scope>NUCLEOTIDE SEQUENCE [LARGE SCALE GENOMIC DNA]</scope>
    <source>
        <strain>ATCC BAA-461 / DSM 12804 / CCUG 43448</strain>
    </source>
</reference>
<dbReference type="EMBL" id="AM902716">
    <property type="protein sequence ID" value="CAP42253.1"/>
    <property type="molecule type" value="Genomic_DNA"/>
</dbReference>
<dbReference type="SMR" id="A9IJN0"/>
<dbReference type="STRING" id="94624.Bpet1914"/>
<dbReference type="KEGG" id="bpt:Bpet1914"/>
<dbReference type="eggNOG" id="COG0335">
    <property type="taxonomic scope" value="Bacteria"/>
</dbReference>
<dbReference type="Proteomes" id="UP000001225">
    <property type="component" value="Chromosome"/>
</dbReference>
<dbReference type="GO" id="GO:0022625">
    <property type="term" value="C:cytosolic large ribosomal subunit"/>
    <property type="evidence" value="ECO:0007669"/>
    <property type="project" value="TreeGrafter"/>
</dbReference>
<dbReference type="GO" id="GO:0003735">
    <property type="term" value="F:structural constituent of ribosome"/>
    <property type="evidence" value="ECO:0007669"/>
    <property type="project" value="InterPro"/>
</dbReference>
<dbReference type="GO" id="GO:0006412">
    <property type="term" value="P:translation"/>
    <property type="evidence" value="ECO:0007669"/>
    <property type="project" value="UniProtKB-UniRule"/>
</dbReference>
<dbReference type="FunFam" id="2.30.30.790:FF:000001">
    <property type="entry name" value="50S ribosomal protein L19"/>
    <property type="match status" value="1"/>
</dbReference>
<dbReference type="Gene3D" id="2.30.30.790">
    <property type="match status" value="1"/>
</dbReference>
<dbReference type="HAMAP" id="MF_00402">
    <property type="entry name" value="Ribosomal_bL19"/>
    <property type="match status" value="1"/>
</dbReference>
<dbReference type="InterPro" id="IPR001857">
    <property type="entry name" value="Ribosomal_bL19"/>
</dbReference>
<dbReference type="InterPro" id="IPR018257">
    <property type="entry name" value="Ribosomal_bL19_CS"/>
</dbReference>
<dbReference type="InterPro" id="IPR038657">
    <property type="entry name" value="Ribosomal_bL19_sf"/>
</dbReference>
<dbReference type="InterPro" id="IPR008991">
    <property type="entry name" value="Translation_prot_SH3-like_sf"/>
</dbReference>
<dbReference type="NCBIfam" id="TIGR01024">
    <property type="entry name" value="rplS_bact"/>
    <property type="match status" value="1"/>
</dbReference>
<dbReference type="PANTHER" id="PTHR15680:SF9">
    <property type="entry name" value="LARGE RIBOSOMAL SUBUNIT PROTEIN BL19M"/>
    <property type="match status" value="1"/>
</dbReference>
<dbReference type="PANTHER" id="PTHR15680">
    <property type="entry name" value="RIBOSOMAL PROTEIN L19"/>
    <property type="match status" value="1"/>
</dbReference>
<dbReference type="Pfam" id="PF01245">
    <property type="entry name" value="Ribosomal_L19"/>
    <property type="match status" value="1"/>
</dbReference>
<dbReference type="PIRSF" id="PIRSF002191">
    <property type="entry name" value="Ribosomal_L19"/>
    <property type="match status" value="1"/>
</dbReference>
<dbReference type="PRINTS" id="PR00061">
    <property type="entry name" value="RIBOSOMALL19"/>
</dbReference>
<dbReference type="SUPFAM" id="SSF50104">
    <property type="entry name" value="Translation proteins SH3-like domain"/>
    <property type="match status" value="1"/>
</dbReference>
<dbReference type="PROSITE" id="PS01015">
    <property type="entry name" value="RIBOSOMAL_L19"/>
    <property type="match status" value="1"/>
</dbReference>
<protein>
    <recommendedName>
        <fullName evidence="1">Large ribosomal subunit protein bL19</fullName>
    </recommendedName>
    <alternativeName>
        <fullName evidence="2">50S ribosomal protein L19</fullName>
    </alternativeName>
</protein>
<sequence length="126" mass="14123">MNLIAVLEQEEIKRLTGDKTMPEFAPGDTVVVSVNVVEGTRKRVQAYEGVVIAKRNRGLNSSFIVRKISSGEAVERTFQLYSPQIAGIEVKRRGDVRRAKLYYLRSRSGKSARIKEKLVTKQAKSA</sequence>
<evidence type="ECO:0000255" key="1">
    <source>
        <dbReference type="HAMAP-Rule" id="MF_00402"/>
    </source>
</evidence>
<evidence type="ECO:0000305" key="2"/>
<keyword id="KW-0687">Ribonucleoprotein</keyword>
<keyword id="KW-0689">Ribosomal protein</keyword>
<gene>
    <name evidence="1" type="primary">rplS</name>
    <name type="ordered locus">Bpet1914</name>
</gene>
<proteinExistence type="inferred from homology"/>
<name>RL19_BORPD</name>